<feature type="chain" id="PRO_0000187433" description="Large ribosomal subunit protein bL34">
    <location>
        <begin position="1"/>
        <end position="44"/>
    </location>
</feature>
<gene>
    <name type="primary">rpmH</name>
    <name type="synonym">rpl34</name>
    <name type="ordered locus">PM1162</name>
</gene>
<sequence length="44" mass="5098">MKRTFQPSVLKRSRTHGFRARMATKNGRQVLARRRAKGRKSLSA</sequence>
<evidence type="ECO:0000305" key="1"/>
<name>RL34_PASMU</name>
<dbReference type="EMBL" id="AE004439">
    <property type="protein sequence ID" value="AAK03246.1"/>
    <property type="molecule type" value="Genomic_DNA"/>
</dbReference>
<dbReference type="RefSeq" id="WP_005539760.1">
    <property type="nucleotide sequence ID" value="NC_002663.1"/>
</dbReference>
<dbReference type="SMR" id="P66245"/>
<dbReference type="STRING" id="272843.PM1162"/>
<dbReference type="EnsemblBacteria" id="AAK03246">
    <property type="protein sequence ID" value="AAK03246"/>
    <property type="gene ID" value="PM1162"/>
</dbReference>
<dbReference type="GeneID" id="93297198"/>
<dbReference type="KEGG" id="pmu:PM1162"/>
<dbReference type="HOGENOM" id="CLU_129938_2_0_6"/>
<dbReference type="OrthoDB" id="9804164at2"/>
<dbReference type="Proteomes" id="UP000000809">
    <property type="component" value="Chromosome"/>
</dbReference>
<dbReference type="GO" id="GO:1990904">
    <property type="term" value="C:ribonucleoprotein complex"/>
    <property type="evidence" value="ECO:0007669"/>
    <property type="project" value="UniProtKB-KW"/>
</dbReference>
<dbReference type="GO" id="GO:0005840">
    <property type="term" value="C:ribosome"/>
    <property type="evidence" value="ECO:0007669"/>
    <property type="project" value="UniProtKB-KW"/>
</dbReference>
<dbReference type="GO" id="GO:0003735">
    <property type="term" value="F:structural constituent of ribosome"/>
    <property type="evidence" value="ECO:0007669"/>
    <property type="project" value="InterPro"/>
</dbReference>
<dbReference type="GO" id="GO:0006412">
    <property type="term" value="P:translation"/>
    <property type="evidence" value="ECO:0007669"/>
    <property type="project" value="UniProtKB-UniRule"/>
</dbReference>
<dbReference type="FunFam" id="1.10.287.3980:FF:000001">
    <property type="entry name" value="Mitochondrial ribosomal protein L34"/>
    <property type="match status" value="1"/>
</dbReference>
<dbReference type="Gene3D" id="1.10.287.3980">
    <property type="match status" value="1"/>
</dbReference>
<dbReference type="HAMAP" id="MF_00391">
    <property type="entry name" value="Ribosomal_bL34"/>
    <property type="match status" value="1"/>
</dbReference>
<dbReference type="InterPro" id="IPR000271">
    <property type="entry name" value="Ribosomal_bL34"/>
</dbReference>
<dbReference type="InterPro" id="IPR020939">
    <property type="entry name" value="Ribosomal_bL34_CS"/>
</dbReference>
<dbReference type="NCBIfam" id="TIGR01030">
    <property type="entry name" value="rpmH_bact"/>
    <property type="match status" value="1"/>
</dbReference>
<dbReference type="PANTHER" id="PTHR14503:SF4">
    <property type="entry name" value="LARGE RIBOSOMAL SUBUNIT PROTEIN BL34M"/>
    <property type="match status" value="1"/>
</dbReference>
<dbReference type="PANTHER" id="PTHR14503">
    <property type="entry name" value="MITOCHONDRIAL RIBOSOMAL PROTEIN 34 FAMILY MEMBER"/>
    <property type="match status" value="1"/>
</dbReference>
<dbReference type="Pfam" id="PF00468">
    <property type="entry name" value="Ribosomal_L34"/>
    <property type="match status" value="1"/>
</dbReference>
<dbReference type="PROSITE" id="PS00784">
    <property type="entry name" value="RIBOSOMAL_L34"/>
    <property type="match status" value="1"/>
</dbReference>
<accession>P66245</accession>
<accession>P44370</accession>
<reference key="1">
    <citation type="journal article" date="2001" name="Proc. Natl. Acad. Sci. U.S.A.">
        <title>Complete genomic sequence of Pasteurella multocida Pm70.</title>
        <authorList>
            <person name="May B.J."/>
            <person name="Zhang Q."/>
            <person name="Li L.L."/>
            <person name="Paustian M.L."/>
            <person name="Whittam T.S."/>
            <person name="Kapur V."/>
        </authorList>
    </citation>
    <scope>NUCLEOTIDE SEQUENCE [LARGE SCALE GENOMIC DNA]</scope>
    <source>
        <strain>Pm70</strain>
    </source>
</reference>
<organism>
    <name type="scientific">Pasteurella multocida (strain Pm70)</name>
    <dbReference type="NCBI Taxonomy" id="272843"/>
    <lineage>
        <taxon>Bacteria</taxon>
        <taxon>Pseudomonadati</taxon>
        <taxon>Pseudomonadota</taxon>
        <taxon>Gammaproteobacteria</taxon>
        <taxon>Pasteurellales</taxon>
        <taxon>Pasteurellaceae</taxon>
        <taxon>Pasteurella</taxon>
    </lineage>
</organism>
<protein>
    <recommendedName>
        <fullName evidence="1">Large ribosomal subunit protein bL34</fullName>
    </recommendedName>
    <alternativeName>
        <fullName>50S ribosomal protein L34</fullName>
    </alternativeName>
</protein>
<comment type="similarity">
    <text evidence="1">Belongs to the bacterial ribosomal protein bL34 family.</text>
</comment>
<keyword id="KW-1185">Reference proteome</keyword>
<keyword id="KW-0687">Ribonucleoprotein</keyword>
<keyword id="KW-0689">Ribosomal protein</keyword>
<proteinExistence type="inferred from homology"/>